<comment type="sequence caution" evidence="2">
    <conflict type="erroneous gene model prediction">
        <sequence resource="EMBL-CDS" id="AAF31291"/>
    </conflict>
</comment>
<dbReference type="EMBL" id="AC006424">
    <property type="protein sequence ID" value="AAF31291.1"/>
    <property type="status" value="ALT_SEQ"/>
    <property type="molecule type" value="Genomic_DNA"/>
</dbReference>
<dbReference type="EMBL" id="CP002684">
    <property type="protein sequence ID" value="AEE31549.1"/>
    <property type="molecule type" value="Genomic_DNA"/>
</dbReference>
<dbReference type="PIR" id="F86454">
    <property type="entry name" value="F86454"/>
</dbReference>
<dbReference type="RefSeq" id="NP_174577.1">
    <property type="nucleotide sequence ID" value="NM_103034.1"/>
</dbReference>
<dbReference type="PaxDb" id="3702-AT1G33010.1"/>
<dbReference type="EnsemblPlants" id="AT1G33010.1">
    <property type="protein sequence ID" value="AT1G33010.1"/>
    <property type="gene ID" value="AT1G33010"/>
</dbReference>
<dbReference type="GeneID" id="840196"/>
<dbReference type="Gramene" id="AT1G33010.1">
    <property type="protein sequence ID" value="AT1G33010.1"/>
    <property type="gene ID" value="AT1G33010"/>
</dbReference>
<dbReference type="KEGG" id="ath:AT1G33010"/>
<dbReference type="Araport" id="AT1G33010"/>
<dbReference type="TAIR" id="AT1G33010"/>
<dbReference type="HOGENOM" id="CLU_027176_8_1_1"/>
<dbReference type="InParanoid" id="Q9MAP2"/>
<dbReference type="OMA" id="WIRYASK"/>
<dbReference type="PhylomeDB" id="Q9MAP2"/>
<dbReference type="PRO" id="PR:Q9MAP2"/>
<dbReference type="Proteomes" id="UP000006548">
    <property type="component" value="Chromosome 1"/>
</dbReference>
<dbReference type="ExpressionAtlas" id="Q9MAP2">
    <property type="expression patterns" value="differential"/>
</dbReference>
<dbReference type="Gene3D" id="1.20.1280.50">
    <property type="match status" value="1"/>
</dbReference>
<dbReference type="InterPro" id="IPR013187">
    <property type="entry name" value="F-box-assoc_dom_typ3"/>
</dbReference>
<dbReference type="InterPro" id="IPR017451">
    <property type="entry name" value="F-box-assoc_interact_dom"/>
</dbReference>
<dbReference type="InterPro" id="IPR036047">
    <property type="entry name" value="F-box-like_dom_sf"/>
</dbReference>
<dbReference type="InterPro" id="IPR001810">
    <property type="entry name" value="F-box_dom"/>
</dbReference>
<dbReference type="NCBIfam" id="TIGR01640">
    <property type="entry name" value="F_box_assoc_1"/>
    <property type="match status" value="1"/>
</dbReference>
<dbReference type="PANTHER" id="PTHR31111">
    <property type="entry name" value="BNAA05G37150D PROTEIN-RELATED"/>
    <property type="match status" value="1"/>
</dbReference>
<dbReference type="PANTHER" id="PTHR31111:SF130">
    <property type="entry name" value="F-BOX ASSOCIATED UBIQUITINATION EFFECTOR FAMILY PROTEIN"/>
    <property type="match status" value="1"/>
</dbReference>
<dbReference type="Pfam" id="PF00646">
    <property type="entry name" value="F-box"/>
    <property type="match status" value="1"/>
</dbReference>
<dbReference type="Pfam" id="PF08268">
    <property type="entry name" value="FBA_3"/>
    <property type="match status" value="1"/>
</dbReference>
<dbReference type="SUPFAM" id="SSF81383">
    <property type="entry name" value="F-box domain"/>
    <property type="match status" value="1"/>
</dbReference>
<organism>
    <name type="scientific">Arabidopsis thaliana</name>
    <name type="common">Mouse-ear cress</name>
    <dbReference type="NCBI Taxonomy" id="3702"/>
    <lineage>
        <taxon>Eukaryota</taxon>
        <taxon>Viridiplantae</taxon>
        <taxon>Streptophyta</taxon>
        <taxon>Embryophyta</taxon>
        <taxon>Tracheophyta</taxon>
        <taxon>Spermatophyta</taxon>
        <taxon>Magnoliopsida</taxon>
        <taxon>eudicotyledons</taxon>
        <taxon>Gunneridae</taxon>
        <taxon>Pentapetalae</taxon>
        <taxon>rosids</taxon>
        <taxon>malvids</taxon>
        <taxon>Brassicales</taxon>
        <taxon>Brassicaceae</taxon>
        <taxon>Camelineae</taxon>
        <taxon>Arabidopsis</taxon>
    </lineage>
</organism>
<evidence type="ECO:0000256" key="1">
    <source>
        <dbReference type="SAM" id="MobiDB-lite"/>
    </source>
</evidence>
<evidence type="ECO:0000305" key="2"/>
<keyword id="KW-1185">Reference proteome</keyword>
<name>FB32_ARATH</name>
<proteinExistence type="predicted"/>
<protein>
    <recommendedName>
        <fullName>Putative F-box protein At1g33010</fullName>
    </recommendedName>
</protein>
<sequence length="361" mass="41417">MNKGNTLDSIPTDLILEIFSRLSAKSVGRLRCLSKLWRKGEWFFFSSLQPQNLYEKPFLVVAADFHMKFSEDMSHDIYSYASGLIYFPKMLIENEKSGAIRVICNPITGQYAILPKLITLQAARSFLGFDPIDNQFKVLLVNNDIVNNDMDILTLGIGELMSEKLKFIEAKCFFALDDVQLINYKGKLGGISWNNHEVAPVELSMWVLEDVEKQEWSKNVYILPKNVVPNNWLHAAGVTVEGDIVFSEAVVSNPFDVFYFNPEKNTLQHVETHCNHEVFDDENLVNIFVDHVEDLKFDVMKPTYAATSIRPTEQKHKPTSTETSMSRKDHQVRTIDQPQQDRCTFESINNKFDVMCLLDDD</sequence>
<reference key="1">
    <citation type="journal article" date="2000" name="Nature">
        <title>Sequence and analysis of chromosome 1 of the plant Arabidopsis thaliana.</title>
        <authorList>
            <person name="Theologis A."/>
            <person name="Ecker J.R."/>
            <person name="Palm C.J."/>
            <person name="Federspiel N.A."/>
            <person name="Kaul S."/>
            <person name="White O."/>
            <person name="Alonso J."/>
            <person name="Altafi H."/>
            <person name="Araujo R."/>
            <person name="Bowman C.L."/>
            <person name="Brooks S.Y."/>
            <person name="Buehler E."/>
            <person name="Chan A."/>
            <person name="Chao Q."/>
            <person name="Chen H."/>
            <person name="Cheuk R.F."/>
            <person name="Chin C.W."/>
            <person name="Chung M.K."/>
            <person name="Conn L."/>
            <person name="Conway A.B."/>
            <person name="Conway A.R."/>
            <person name="Creasy T.H."/>
            <person name="Dewar K."/>
            <person name="Dunn P."/>
            <person name="Etgu P."/>
            <person name="Feldblyum T.V."/>
            <person name="Feng J.-D."/>
            <person name="Fong B."/>
            <person name="Fujii C.Y."/>
            <person name="Gill J.E."/>
            <person name="Goldsmith A.D."/>
            <person name="Haas B."/>
            <person name="Hansen N.F."/>
            <person name="Hughes B."/>
            <person name="Huizar L."/>
            <person name="Hunter J.L."/>
            <person name="Jenkins J."/>
            <person name="Johnson-Hopson C."/>
            <person name="Khan S."/>
            <person name="Khaykin E."/>
            <person name="Kim C.J."/>
            <person name="Koo H.L."/>
            <person name="Kremenetskaia I."/>
            <person name="Kurtz D.B."/>
            <person name="Kwan A."/>
            <person name="Lam B."/>
            <person name="Langin-Hooper S."/>
            <person name="Lee A."/>
            <person name="Lee J.M."/>
            <person name="Lenz C.A."/>
            <person name="Li J.H."/>
            <person name="Li Y.-P."/>
            <person name="Lin X."/>
            <person name="Liu S.X."/>
            <person name="Liu Z.A."/>
            <person name="Luros J.S."/>
            <person name="Maiti R."/>
            <person name="Marziali A."/>
            <person name="Militscher J."/>
            <person name="Miranda M."/>
            <person name="Nguyen M."/>
            <person name="Nierman W.C."/>
            <person name="Osborne B.I."/>
            <person name="Pai G."/>
            <person name="Peterson J."/>
            <person name="Pham P.K."/>
            <person name="Rizzo M."/>
            <person name="Rooney T."/>
            <person name="Rowley D."/>
            <person name="Sakano H."/>
            <person name="Salzberg S.L."/>
            <person name="Schwartz J.R."/>
            <person name="Shinn P."/>
            <person name="Southwick A.M."/>
            <person name="Sun H."/>
            <person name="Tallon L.J."/>
            <person name="Tambunga G."/>
            <person name="Toriumi M.J."/>
            <person name="Town C.D."/>
            <person name="Utterback T."/>
            <person name="Van Aken S."/>
            <person name="Vaysberg M."/>
            <person name="Vysotskaia V.S."/>
            <person name="Walker M."/>
            <person name="Wu D."/>
            <person name="Yu G."/>
            <person name="Fraser C.M."/>
            <person name="Venter J.C."/>
            <person name="Davis R.W."/>
        </authorList>
    </citation>
    <scope>NUCLEOTIDE SEQUENCE [LARGE SCALE GENOMIC DNA]</scope>
    <source>
        <strain>cv. Columbia</strain>
    </source>
</reference>
<reference key="2">
    <citation type="journal article" date="2017" name="Plant J.">
        <title>Araport11: a complete reannotation of the Arabidopsis thaliana reference genome.</title>
        <authorList>
            <person name="Cheng C.Y."/>
            <person name="Krishnakumar V."/>
            <person name="Chan A.P."/>
            <person name="Thibaud-Nissen F."/>
            <person name="Schobel S."/>
            <person name="Town C.D."/>
        </authorList>
    </citation>
    <scope>GENOME REANNOTATION</scope>
    <source>
        <strain>cv. Columbia</strain>
    </source>
</reference>
<feature type="chain" id="PRO_0000283308" description="Putative F-box protein At1g33010">
    <location>
        <begin position="1"/>
        <end position="361"/>
    </location>
</feature>
<feature type="domain" description="F-box">
    <location>
        <begin position="4"/>
        <end position="50"/>
    </location>
</feature>
<feature type="region of interest" description="Disordered" evidence="1">
    <location>
        <begin position="308"/>
        <end position="339"/>
    </location>
</feature>
<accession>Q9MAP2</accession>
<gene>
    <name type="ordered locus">At1g33010</name>
    <name type="ORF">F9L11.16</name>
</gene>